<gene>
    <name type="primary">TRB1</name>
    <name type="ordered locus">At1g49950</name>
    <name type="ORF">F2J10.16</name>
</gene>
<proteinExistence type="evidence at protein level"/>
<protein>
    <recommendedName>
        <fullName>Telomere repeat-binding factor 1</fullName>
        <shortName>AtTRB1</shortName>
    </recommendedName>
    <alternativeName>
        <fullName>MYB transcription factor</fullName>
    </alternativeName>
</protein>
<name>TRB1_ARATH</name>
<sequence length="300" mass="33017">MGAPKQKWTQEEESALKSGVIKHGPGKWRTILKDPEFSGVLYLRSNVDLKDKWRNMSVMANGWGSREKSRLAVKRTFSLPKQEENSLALTNSLQSDEENVDATSGLQVSSNPPPRRPNVRLDSLIMEAIATLKEPGGCNKTTIGAYIEDQYHAPPDFKRLLSTKLKYLTSCGKLVKVKRKYRIPNSTPLSSHRRKGLGVFGGKQRTSSLPSPKTDIDEVNFQTRSQIDTEIARMKSMNVHEAAAVAAQAVAEAEAAMAEAEEAAKEAEAAEAEAEAAQAFAEEASKTLKGRNICKMMIRA</sequence>
<evidence type="ECO:0000255" key="1"/>
<evidence type="ECO:0000255" key="2">
    <source>
        <dbReference type="PROSITE-ProRule" id="PRU00625"/>
    </source>
</evidence>
<evidence type="ECO:0000255" key="3">
    <source>
        <dbReference type="PROSITE-ProRule" id="PRU00837"/>
    </source>
</evidence>
<evidence type="ECO:0000256" key="4">
    <source>
        <dbReference type="SAM" id="MobiDB-lite"/>
    </source>
</evidence>
<evidence type="ECO:0000269" key="5">
    <source>
    </source>
</evidence>
<evidence type="ECO:0000269" key="6">
    <source>
    </source>
</evidence>
<evidence type="ECO:0000269" key="7">
    <source>
    </source>
</evidence>
<evidence type="ECO:0000269" key="8">
    <source>
    </source>
</evidence>
<evidence type="ECO:0000269" key="9">
    <source>
    </source>
</evidence>
<evidence type="ECO:0000305" key="10"/>
<dbReference type="EMBL" id="U83623">
    <property type="protein sequence ID" value="AAL73123.1"/>
    <property type="molecule type" value="Genomic_DNA"/>
</dbReference>
<dbReference type="EMBL" id="U83624">
    <property type="protein sequence ID" value="AAL73438.1"/>
    <property type="molecule type" value="mRNA"/>
</dbReference>
<dbReference type="EMBL" id="AY519539">
    <property type="protein sequence ID" value="AAS10009.1"/>
    <property type="molecule type" value="mRNA"/>
</dbReference>
<dbReference type="EMBL" id="AC015445">
    <property type="protein sequence ID" value="AAF76448.1"/>
    <property type="status" value="ALT_SEQ"/>
    <property type="molecule type" value="Genomic_DNA"/>
</dbReference>
<dbReference type="EMBL" id="CP002684">
    <property type="protein sequence ID" value="AEE32497.1"/>
    <property type="molecule type" value="Genomic_DNA"/>
</dbReference>
<dbReference type="EMBL" id="CP002684">
    <property type="protein sequence ID" value="AEE32498.1"/>
    <property type="molecule type" value="Genomic_DNA"/>
</dbReference>
<dbReference type="EMBL" id="CP002684">
    <property type="protein sequence ID" value="AEE32499.1"/>
    <property type="molecule type" value="Genomic_DNA"/>
</dbReference>
<dbReference type="EMBL" id="AY062736">
    <property type="protein sequence ID" value="AAL32814.1"/>
    <property type="molecule type" value="mRNA"/>
</dbReference>
<dbReference type="EMBL" id="BT009677">
    <property type="protein sequence ID" value="AAP80178.1"/>
    <property type="molecule type" value="mRNA"/>
</dbReference>
<dbReference type="EMBL" id="AY087994">
    <property type="protein sequence ID" value="AAM65540.1"/>
    <property type="molecule type" value="mRNA"/>
</dbReference>
<dbReference type="RefSeq" id="NP_564559.1">
    <property type="nucleotide sequence ID" value="NM_103882.4"/>
</dbReference>
<dbReference type="RefSeq" id="NP_849789.1">
    <property type="nucleotide sequence ID" value="NM_179458.3"/>
</dbReference>
<dbReference type="RefSeq" id="NP_973998.1">
    <property type="nucleotide sequence ID" value="NM_202269.2"/>
</dbReference>
<dbReference type="SMR" id="Q8VWK4"/>
<dbReference type="BioGRID" id="26643">
    <property type="interactions" value="6"/>
</dbReference>
<dbReference type="FunCoup" id="Q8VWK4">
    <property type="interactions" value="2053"/>
</dbReference>
<dbReference type="IntAct" id="Q8VWK4">
    <property type="interactions" value="4"/>
</dbReference>
<dbReference type="MINT" id="Q8VWK4"/>
<dbReference type="STRING" id="3702.Q8VWK4"/>
<dbReference type="iPTMnet" id="Q8VWK4"/>
<dbReference type="PaxDb" id="3702-AT1G49950.3"/>
<dbReference type="ProteomicsDB" id="228387"/>
<dbReference type="EnsemblPlants" id="AT1G49950.1">
    <property type="protein sequence ID" value="AT1G49950.1"/>
    <property type="gene ID" value="AT1G49950"/>
</dbReference>
<dbReference type="EnsemblPlants" id="AT1G49950.2">
    <property type="protein sequence ID" value="AT1G49950.2"/>
    <property type="gene ID" value="AT1G49950"/>
</dbReference>
<dbReference type="EnsemblPlants" id="AT1G49950.3">
    <property type="protein sequence ID" value="AT1G49950.3"/>
    <property type="gene ID" value="AT1G49950"/>
</dbReference>
<dbReference type="GeneID" id="841418"/>
<dbReference type="Gramene" id="AT1G49950.1">
    <property type="protein sequence ID" value="AT1G49950.1"/>
    <property type="gene ID" value="AT1G49950"/>
</dbReference>
<dbReference type="Gramene" id="AT1G49950.2">
    <property type="protein sequence ID" value="AT1G49950.2"/>
    <property type="gene ID" value="AT1G49950"/>
</dbReference>
<dbReference type="Gramene" id="AT1G49950.3">
    <property type="protein sequence ID" value="AT1G49950.3"/>
    <property type="gene ID" value="AT1G49950"/>
</dbReference>
<dbReference type="KEGG" id="ath:AT1G49950"/>
<dbReference type="Araport" id="AT1G49950"/>
<dbReference type="TAIR" id="AT1G49950">
    <property type="gene designation" value="TRB1"/>
</dbReference>
<dbReference type="eggNOG" id="ENOG502QSU2">
    <property type="taxonomic scope" value="Eukaryota"/>
</dbReference>
<dbReference type="HOGENOM" id="CLU_047477_0_1_1"/>
<dbReference type="InParanoid" id="Q8VWK4"/>
<dbReference type="OMA" id="CKMMIRA"/>
<dbReference type="PhylomeDB" id="Q8VWK4"/>
<dbReference type="PRO" id="PR:Q8VWK4"/>
<dbReference type="Proteomes" id="UP000006548">
    <property type="component" value="Chromosome 1"/>
</dbReference>
<dbReference type="ExpressionAtlas" id="Q8VWK4">
    <property type="expression patterns" value="baseline and differential"/>
</dbReference>
<dbReference type="GO" id="GO:0000785">
    <property type="term" value="C:chromatin"/>
    <property type="evidence" value="ECO:0000314"/>
    <property type="project" value="UniProtKB"/>
</dbReference>
<dbReference type="GO" id="GO:0005730">
    <property type="term" value="C:nucleolus"/>
    <property type="evidence" value="ECO:0000314"/>
    <property type="project" value="UniProtKB"/>
</dbReference>
<dbReference type="GO" id="GO:0000786">
    <property type="term" value="C:nucleosome"/>
    <property type="evidence" value="ECO:0007669"/>
    <property type="project" value="InterPro"/>
</dbReference>
<dbReference type="GO" id="GO:0005634">
    <property type="term" value="C:nucleus"/>
    <property type="evidence" value="ECO:0000314"/>
    <property type="project" value="UniProtKB"/>
</dbReference>
<dbReference type="GO" id="GO:0032991">
    <property type="term" value="C:protein-containing complex"/>
    <property type="evidence" value="ECO:0000353"/>
    <property type="project" value="TAIR"/>
</dbReference>
<dbReference type="GO" id="GO:0003700">
    <property type="term" value="F:DNA-binding transcription factor activity"/>
    <property type="evidence" value="ECO:0000250"/>
    <property type="project" value="TAIR"/>
</dbReference>
<dbReference type="GO" id="GO:0003691">
    <property type="term" value="F:double-stranded telomeric DNA binding"/>
    <property type="evidence" value="ECO:0000314"/>
    <property type="project" value="TAIR"/>
</dbReference>
<dbReference type="GO" id="GO:1990841">
    <property type="term" value="F:promoter-specific chromatin binding"/>
    <property type="evidence" value="ECO:0000314"/>
    <property type="project" value="TAIR"/>
</dbReference>
<dbReference type="GO" id="GO:0042803">
    <property type="term" value="F:protein homodimerization activity"/>
    <property type="evidence" value="ECO:0000353"/>
    <property type="project" value="TAIR"/>
</dbReference>
<dbReference type="GO" id="GO:0000976">
    <property type="term" value="F:transcription cis-regulatory region binding"/>
    <property type="evidence" value="ECO:0000353"/>
    <property type="project" value="TAIR"/>
</dbReference>
<dbReference type="GO" id="GO:0006334">
    <property type="term" value="P:nucleosome assembly"/>
    <property type="evidence" value="ECO:0007669"/>
    <property type="project" value="InterPro"/>
</dbReference>
<dbReference type="GO" id="GO:0006357">
    <property type="term" value="P:regulation of transcription by RNA polymerase II"/>
    <property type="evidence" value="ECO:0000316"/>
    <property type="project" value="TAIR"/>
</dbReference>
<dbReference type="CDD" id="cd11660">
    <property type="entry name" value="SANT_TRF"/>
    <property type="match status" value="1"/>
</dbReference>
<dbReference type="FunFam" id="1.10.10.10:FF:000937">
    <property type="entry name" value="Telomere repeat-binding factor 1"/>
    <property type="match status" value="1"/>
</dbReference>
<dbReference type="FunFam" id="1.10.10.60:FF:000168">
    <property type="entry name" value="Telomere repeat-binding factor 1"/>
    <property type="match status" value="1"/>
</dbReference>
<dbReference type="FunFam" id="1.10.246.220:FF:000002">
    <property type="entry name" value="Telomere repeat-binding factor 1"/>
    <property type="match status" value="1"/>
</dbReference>
<dbReference type="Gene3D" id="1.10.10.60">
    <property type="entry name" value="Homeodomain-like"/>
    <property type="match status" value="1"/>
</dbReference>
<dbReference type="Gene3D" id="1.10.10.10">
    <property type="entry name" value="Winged helix-like DNA-binding domain superfamily/Winged helix DNA-binding domain"/>
    <property type="match status" value="1"/>
</dbReference>
<dbReference type="InterPro" id="IPR005818">
    <property type="entry name" value="Histone_H1/H5_H15"/>
</dbReference>
<dbReference type="InterPro" id="IPR009057">
    <property type="entry name" value="Homeodomain-like_sf"/>
</dbReference>
<dbReference type="InterPro" id="IPR017930">
    <property type="entry name" value="Myb_dom"/>
</dbReference>
<dbReference type="InterPro" id="IPR001005">
    <property type="entry name" value="SANT/Myb"/>
</dbReference>
<dbReference type="InterPro" id="IPR044597">
    <property type="entry name" value="SMH1-6"/>
</dbReference>
<dbReference type="InterPro" id="IPR036388">
    <property type="entry name" value="WH-like_DNA-bd_sf"/>
</dbReference>
<dbReference type="InterPro" id="IPR036390">
    <property type="entry name" value="WH_DNA-bd_sf"/>
</dbReference>
<dbReference type="PANTHER" id="PTHR46267">
    <property type="entry name" value="SINGLE MYB HISTONE 4"/>
    <property type="match status" value="1"/>
</dbReference>
<dbReference type="PANTHER" id="PTHR46267:SF8">
    <property type="entry name" value="TELOMERE REPEAT-BINDING FACTOR 1"/>
    <property type="match status" value="1"/>
</dbReference>
<dbReference type="Pfam" id="PF00538">
    <property type="entry name" value="Linker_histone"/>
    <property type="match status" value="1"/>
</dbReference>
<dbReference type="Pfam" id="PF00249">
    <property type="entry name" value="Myb_DNA-binding"/>
    <property type="match status" value="1"/>
</dbReference>
<dbReference type="SMART" id="SM00526">
    <property type="entry name" value="H15"/>
    <property type="match status" value="1"/>
</dbReference>
<dbReference type="SMART" id="SM00717">
    <property type="entry name" value="SANT"/>
    <property type="match status" value="1"/>
</dbReference>
<dbReference type="SUPFAM" id="SSF46689">
    <property type="entry name" value="Homeodomain-like"/>
    <property type="match status" value="1"/>
</dbReference>
<dbReference type="SUPFAM" id="SSF46785">
    <property type="entry name" value="Winged helix' DNA-binding domain"/>
    <property type="match status" value="1"/>
</dbReference>
<dbReference type="PROSITE" id="PS51504">
    <property type="entry name" value="H15"/>
    <property type="match status" value="1"/>
</dbReference>
<dbReference type="PROSITE" id="PS51294">
    <property type="entry name" value="HTH_MYB"/>
    <property type="match status" value="1"/>
</dbReference>
<feature type="chain" id="PRO_0000417010" description="Telomere repeat-binding factor 1">
    <location>
        <begin position="1"/>
        <end position="300"/>
    </location>
</feature>
<feature type="domain" description="HTH myb-type" evidence="2">
    <location>
        <begin position="1"/>
        <end position="58"/>
    </location>
</feature>
<feature type="domain" description="H15" evidence="3">
    <location>
        <begin position="117"/>
        <end position="185"/>
    </location>
</feature>
<feature type="DNA-binding region" description="H-T-H motif" evidence="2">
    <location>
        <begin position="28"/>
        <end position="57"/>
    </location>
</feature>
<feature type="region of interest" description="Disordered" evidence="4">
    <location>
        <begin position="93"/>
        <end position="119"/>
    </location>
</feature>
<feature type="region of interest" description="Disordered" evidence="4">
    <location>
        <begin position="185"/>
        <end position="213"/>
    </location>
</feature>
<feature type="coiled-coil region" evidence="1">
    <location>
        <begin position="241"/>
        <end position="290"/>
    </location>
</feature>
<feature type="sequence conflict" description="In Ref. 6; AAM65540." evidence="10" ref="6">
    <original>P</original>
    <variation>S</variation>
    <location>
        <position position="188"/>
    </location>
</feature>
<feature type="sequence conflict" description="In Ref. 1; AAL73438 and 6; AAM65540." evidence="10" ref="1 6">
    <original>A</original>
    <variation>V</variation>
    <location>
        <position position="276"/>
    </location>
</feature>
<organism>
    <name type="scientific">Arabidopsis thaliana</name>
    <name type="common">Mouse-ear cress</name>
    <dbReference type="NCBI Taxonomy" id="3702"/>
    <lineage>
        <taxon>Eukaryota</taxon>
        <taxon>Viridiplantae</taxon>
        <taxon>Streptophyta</taxon>
        <taxon>Embryophyta</taxon>
        <taxon>Tracheophyta</taxon>
        <taxon>Spermatophyta</taxon>
        <taxon>Magnoliopsida</taxon>
        <taxon>eudicotyledons</taxon>
        <taxon>Gunneridae</taxon>
        <taxon>Pentapetalae</taxon>
        <taxon>rosids</taxon>
        <taxon>malvids</taxon>
        <taxon>Brassicales</taxon>
        <taxon>Brassicaceae</taxon>
        <taxon>Camelineae</taxon>
        <taxon>Arabidopsis</taxon>
    </lineage>
</organism>
<keyword id="KW-0158">Chromosome</keyword>
<keyword id="KW-0175">Coiled coil</keyword>
<keyword id="KW-0238">DNA-binding</keyword>
<keyword id="KW-0539">Nucleus</keyword>
<keyword id="KW-1185">Reference proteome</keyword>
<keyword id="KW-0804">Transcription</keyword>
<keyword id="KW-0805">Transcription regulation</keyword>
<reference key="1">
    <citation type="submission" date="1997-01" db="EMBL/GenBank/DDBJ databases">
        <title>Identification and functional characterisation of the Arabidopsis telomere repeat binding factor TRB1.</title>
        <authorList>
            <person name="Sprenger M."/>
            <person name="Weisshaar B."/>
        </authorList>
    </citation>
    <scope>NUCLEOTIDE SEQUENCE [GENOMIC DNA / MRNA]</scope>
    <source>
        <strain>cv. Columbia</strain>
        <strain>cv. Landsberg erecta</strain>
    </source>
</reference>
<reference key="2">
    <citation type="submission" date="2004-01" db="EMBL/GenBank/DDBJ databases">
        <title>The MYB transcription factor family in Arabidopsis: a genome-wide cloning and expression pattern analysis.</title>
        <authorList>
            <person name="Qu L.-J."/>
            <person name="Gu H."/>
        </authorList>
    </citation>
    <scope>NUCLEOTIDE SEQUENCE [MRNA]</scope>
</reference>
<reference key="3">
    <citation type="journal article" date="2000" name="Nature">
        <title>Sequence and analysis of chromosome 1 of the plant Arabidopsis thaliana.</title>
        <authorList>
            <person name="Theologis A."/>
            <person name="Ecker J.R."/>
            <person name="Palm C.J."/>
            <person name="Federspiel N.A."/>
            <person name="Kaul S."/>
            <person name="White O."/>
            <person name="Alonso J."/>
            <person name="Altafi H."/>
            <person name="Araujo R."/>
            <person name="Bowman C.L."/>
            <person name="Brooks S.Y."/>
            <person name="Buehler E."/>
            <person name="Chan A."/>
            <person name="Chao Q."/>
            <person name="Chen H."/>
            <person name="Cheuk R.F."/>
            <person name="Chin C.W."/>
            <person name="Chung M.K."/>
            <person name="Conn L."/>
            <person name="Conway A.B."/>
            <person name="Conway A.R."/>
            <person name="Creasy T.H."/>
            <person name="Dewar K."/>
            <person name="Dunn P."/>
            <person name="Etgu P."/>
            <person name="Feldblyum T.V."/>
            <person name="Feng J.-D."/>
            <person name="Fong B."/>
            <person name="Fujii C.Y."/>
            <person name="Gill J.E."/>
            <person name="Goldsmith A.D."/>
            <person name="Haas B."/>
            <person name="Hansen N.F."/>
            <person name="Hughes B."/>
            <person name="Huizar L."/>
            <person name="Hunter J.L."/>
            <person name="Jenkins J."/>
            <person name="Johnson-Hopson C."/>
            <person name="Khan S."/>
            <person name="Khaykin E."/>
            <person name="Kim C.J."/>
            <person name="Koo H.L."/>
            <person name="Kremenetskaia I."/>
            <person name="Kurtz D.B."/>
            <person name="Kwan A."/>
            <person name="Lam B."/>
            <person name="Langin-Hooper S."/>
            <person name="Lee A."/>
            <person name="Lee J.M."/>
            <person name="Lenz C.A."/>
            <person name="Li J.H."/>
            <person name="Li Y.-P."/>
            <person name="Lin X."/>
            <person name="Liu S.X."/>
            <person name="Liu Z.A."/>
            <person name="Luros J.S."/>
            <person name="Maiti R."/>
            <person name="Marziali A."/>
            <person name="Militscher J."/>
            <person name="Miranda M."/>
            <person name="Nguyen M."/>
            <person name="Nierman W.C."/>
            <person name="Osborne B.I."/>
            <person name="Pai G."/>
            <person name="Peterson J."/>
            <person name="Pham P.K."/>
            <person name="Rizzo M."/>
            <person name="Rooney T."/>
            <person name="Rowley D."/>
            <person name="Sakano H."/>
            <person name="Salzberg S.L."/>
            <person name="Schwartz J.R."/>
            <person name="Shinn P."/>
            <person name="Southwick A.M."/>
            <person name="Sun H."/>
            <person name="Tallon L.J."/>
            <person name="Tambunga G."/>
            <person name="Toriumi M.J."/>
            <person name="Town C.D."/>
            <person name="Utterback T."/>
            <person name="Van Aken S."/>
            <person name="Vaysberg M."/>
            <person name="Vysotskaia V.S."/>
            <person name="Walker M."/>
            <person name="Wu D."/>
            <person name="Yu G."/>
            <person name="Fraser C.M."/>
            <person name="Venter J.C."/>
            <person name="Davis R.W."/>
        </authorList>
    </citation>
    <scope>NUCLEOTIDE SEQUENCE [LARGE SCALE GENOMIC DNA]</scope>
    <source>
        <strain>cv. Columbia</strain>
    </source>
</reference>
<reference key="4">
    <citation type="journal article" date="2017" name="Plant J.">
        <title>Araport11: a complete reannotation of the Arabidopsis thaliana reference genome.</title>
        <authorList>
            <person name="Cheng C.Y."/>
            <person name="Krishnakumar V."/>
            <person name="Chan A.P."/>
            <person name="Thibaud-Nissen F."/>
            <person name="Schobel S."/>
            <person name="Town C.D."/>
        </authorList>
    </citation>
    <scope>GENOME REANNOTATION</scope>
    <source>
        <strain>cv. Columbia</strain>
    </source>
</reference>
<reference key="5">
    <citation type="journal article" date="2003" name="Science">
        <title>Empirical analysis of transcriptional activity in the Arabidopsis genome.</title>
        <authorList>
            <person name="Yamada K."/>
            <person name="Lim J."/>
            <person name="Dale J.M."/>
            <person name="Chen H."/>
            <person name="Shinn P."/>
            <person name="Palm C.J."/>
            <person name="Southwick A.M."/>
            <person name="Wu H.C."/>
            <person name="Kim C.J."/>
            <person name="Nguyen M."/>
            <person name="Pham P.K."/>
            <person name="Cheuk R.F."/>
            <person name="Karlin-Newmann G."/>
            <person name="Liu S.X."/>
            <person name="Lam B."/>
            <person name="Sakano H."/>
            <person name="Wu T."/>
            <person name="Yu G."/>
            <person name="Miranda M."/>
            <person name="Quach H.L."/>
            <person name="Tripp M."/>
            <person name="Chang C.H."/>
            <person name="Lee J.M."/>
            <person name="Toriumi M.J."/>
            <person name="Chan M.M."/>
            <person name="Tang C.C."/>
            <person name="Onodera C.S."/>
            <person name="Deng J.M."/>
            <person name="Akiyama K."/>
            <person name="Ansari Y."/>
            <person name="Arakawa T."/>
            <person name="Banh J."/>
            <person name="Banno F."/>
            <person name="Bowser L."/>
            <person name="Brooks S.Y."/>
            <person name="Carninci P."/>
            <person name="Chao Q."/>
            <person name="Choy N."/>
            <person name="Enju A."/>
            <person name="Goldsmith A.D."/>
            <person name="Gurjal M."/>
            <person name="Hansen N.F."/>
            <person name="Hayashizaki Y."/>
            <person name="Johnson-Hopson C."/>
            <person name="Hsuan V.W."/>
            <person name="Iida K."/>
            <person name="Karnes M."/>
            <person name="Khan S."/>
            <person name="Koesema E."/>
            <person name="Ishida J."/>
            <person name="Jiang P.X."/>
            <person name="Jones T."/>
            <person name="Kawai J."/>
            <person name="Kamiya A."/>
            <person name="Meyers C."/>
            <person name="Nakajima M."/>
            <person name="Narusaka M."/>
            <person name="Seki M."/>
            <person name="Sakurai T."/>
            <person name="Satou M."/>
            <person name="Tamse R."/>
            <person name="Vaysberg M."/>
            <person name="Wallender E.K."/>
            <person name="Wong C."/>
            <person name="Yamamura Y."/>
            <person name="Yuan S."/>
            <person name="Shinozaki K."/>
            <person name="Davis R.W."/>
            <person name="Theologis A."/>
            <person name="Ecker J.R."/>
        </authorList>
    </citation>
    <scope>NUCLEOTIDE SEQUENCE [LARGE SCALE MRNA]</scope>
    <source>
        <strain>cv. Columbia</strain>
    </source>
</reference>
<reference key="6">
    <citation type="submission" date="2002-03" db="EMBL/GenBank/DDBJ databases">
        <title>Full-length cDNA from Arabidopsis thaliana.</title>
        <authorList>
            <person name="Brover V.V."/>
            <person name="Troukhan M.E."/>
            <person name="Alexandrov N.A."/>
            <person name="Lu Y.-P."/>
            <person name="Flavell R.B."/>
            <person name="Feldmann K.A."/>
        </authorList>
    </citation>
    <scope>NUCLEOTIDE SEQUENCE [LARGE SCALE MRNA]</scope>
</reference>
<reference key="7">
    <citation type="journal article" date="2003" name="Plant Physiol.">
        <title>The maize Single myb histone 1 gene, Smh1, belongs to a novel gene family and encodes a protein that binds telomere DNA repeats in vitro.</title>
        <authorList>
            <person name="Marian C.O."/>
            <person name="Bordoli S.J."/>
            <person name="Goltz M."/>
            <person name="Santarella R.A."/>
            <person name="Jackson L.P."/>
            <person name="Danilevskaya O."/>
            <person name="Beckstette M."/>
            <person name="Meeley R."/>
            <person name="Bass H.W."/>
        </authorList>
    </citation>
    <scope>GENE FAMILY</scope>
</reference>
<reference key="8">
    <citation type="journal article" date="2004" name="FEBS Lett.">
        <title>Interactions of putative telomere-binding proteins in Arabidopsis thaliana: identification of functional TRF2 homolog in plants.</title>
        <authorList>
            <person name="Kuchar M."/>
            <person name="Fajkus J."/>
        </authorList>
    </citation>
    <scope>HOMODIMERIZATION</scope>
    <scope>INTERACTION WITH POT1B; TRB2 AND TRB3</scope>
</reference>
<reference key="9">
    <citation type="journal article" date="2006" name="Plant Mol. Biol.">
        <title>The MYB transcription factor superfamily of Arabidopsis: expression analysis and phylogenetic comparison with the rice MYB family.</title>
        <authorList>
            <person name="Chen Y."/>
            <person name="Yang X."/>
            <person name="He K."/>
            <person name="Liu M."/>
            <person name="Li J."/>
            <person name="Gao Z."/>
            <person name="Lin Z."/>
            <person name="Zhang Y."/>
            <person name="Wang X."/>
            <person name="Qiu X."/>
            <person name="Shen Y."/>
            <person name="Zhang L."/>
            <person name="Deng X."/>
            <person name="Luo J."/>
            <person name="Deng X.-W."/>
            <person name="Chen Z."/>
            <person name="Gu H."/>
            <person name="Qu L.-J."/>
        </authorList>
    </citation>
    <scope>GENE FAMILY</scope>
</reference>
<reference key="10">
    <citation type="journal article" date="2008" name="FEBS Lett.">
        <title>Mapping of interaction domains of putative telomere-binding proteins AtTRB1 and AtPOT1b from Arabidopsis thaliana.</title>
        <authorList>
            <person name="Schrumpfova P.P."/>
            <person name="Kuchar M."/>
            <person name="Palecek J."/>
            <person name="Fajkus J."/>
        </authorList>
    </citation>
    <scope>HOMODIMERIZATION</scope>
    <scope>INTERACTION WITH POT1B; TRB2 AND TRB3</scope>
</reference>
<reference key="11">
    <citation type="journal article" date="2008" name="Phytochemistry">
        <title>Functional characterization of domains in AtTRB1, a putative telomere-binding protein in Arabidopsis thaliana.</title>
        <authorList>
            <person name="Mozgova I."/>
            <person name="Schrumpfova P.P."/>
            <person name="Hofr C."/>
            <person name="Fajkus J."/>
        </authorList>
    </citation>
    <scope>MULTIMERIZATION</scope>
    <scope>DNA-BINDING</scope>
    <scope>DOMAIN</scope>
</reference>
<reference key="12">
    <citation type="journal article" date="2009" name="Biochem. J.">
        <title>Single-Myb-histone proteins from Arabidopsis thaliana: a quantitative study of telomere-binding specificity and kinetics.</title>
        <authorList>
            <person name="Hofr C."/>
            <person name="Sultesova P."/>
            <person name="Zimmermann M."/>
            <person name="Mozgova I."/>
            <person name="Prochazkova Schrumpfova P."/>
            <person name="Wimmerova M."/>
            <person name="Fajkus J."/>
        </authorList>
    </citation>
    <scope>FUNCTION</scope>
</reference>
<reference key="13">
    <citation type="journal article" date="2010" name="Plant J.">
        <title>AtTRB1, a telomeric DNA-binding protein from Arabidopsis, is concentrated in the nucleolus and shows highly dynamic association with chromatin.</title>
        <authorList>
            <person name="Dvorackova M."/>
            <person name="Rossignol P."/>
            <person name="Shaw P.J."/>
            <person name="Koroleva O.A."/>
            <person name="Doonan J.H."/>
            <person name="Fajkus J."/>
        </authorList>
    </citation>
    <scope>SUBCELLULAR LOCATION</scope>
</reference>
<comment type="function">
    <text evidence="8">Binds preferentially double-stranded telomeric repeats.</text>
</comment>
<comment type="subunit">
    <text evidence="5 6">Forms a homodimer and heterodimers with TRB2 or TRB3. Interacts with POT1b, TRB2 and TRB3 through its H15 domain.</text>
</comment>
<comment type="interaction">
    <interactant intactId="EBI-476101">
        <id>Q8VWK4</id>
    </interactant>
    <interactant intactId="EBI-476223">
        <id>Q6NKX5</id>
        <label>POT1B</label>
    </interactant>
    <organismsDiffer>false</organismsDiffer>
    <experiments>4</experiments>
</comment>
<comment type="interaction">
    <interactant intactId="EBI-476101">
        <id>Q8VWK4</id>
    </interactant>
    <interactant intactId="EBI-476115">
        <id>Q9FJW5</id>
        <label>TRB2</label>
    </interactant>
    <organismsDiffer>false</organismsDiffer>
    <experiments>4</experiments>
</comment>
<comment type="interaction">
    <interactant intactId="EBI-476101">
        <id>Q8VWK4</id>
    </interactant>
    <interactant intactId="EBI-476134">
        <id>Q9M2X3</id>
        <label>TRB3</label>
    </interactant>
    <organismsDiffer>false</organismsDiffer>
    <experiments>3</experiments>
</comment>
<comment type="subcellular location">
    <subcellularLocation>
        <location evidence="2 3 9">Nucleus</location>
    </subcellularLocation>
    <subcellularLocation>
        <location evidence="9">Nucleus</location>
        <location evidence="9">Nucleolus</location>
    </subcellularLocation>
    <subcellularLocation>
        <location evidence="3 9">Chromosome</location>
    </subcellularLocation>
    <text>Localized to the nucleolus during interphase.</text>
</comment>
<comment type="domain">
    <text evidence="7">HTH myb-type domain confers double-stranded telomeric DNA-binding while the H15 domain is involved in non-specific DNA-protein interaction and multimerization.</text>
</comment>
<comment type="similarity">
    <text evidence="3">Belongs to the histone H1/H5 family. SMH subfamily.</text>
</comment>
<comment type="sequence caution" evidence="10">
    <conflict type="erroneous gene model prediction">
        <sequence resource="EMBL-CDS" id="AAF76448"/>
    </conflict>
</comment>
<accession>Q8VWK4</accession>
<accession>Q8LA70</accession>
<accession>Q8VX39</accession>
<accession>Q9LPL9</accession>